<proteinExistence type="evidence at transcript level"/>
<accession>Q6GPJ8</accession>
<gene>
    <name type="primary">cep97</name>
    <name type="synonym">lrriq2</name>
</gene>
<sequence>MAVAHLACDSQGSVVDLSGQGLQKLSPTLPFGNDTQTLILDKNQIIKLEHVEKCRNLVQLSVANNRLVRMMGVAKLIHLRVLNLPHNSIGYVEGLKDLVHLEWINLAGNNLKIIDQINSSTSLQHLDLSDNNISQIGDLSKLKSLKTLLLHGNNIASLRAASACLPQSLTILSLAENEIRDLNEVAFLAGLVDLEQLSIMNNPCVMATPSIPGFDYRPFIVSWCLNLKVLDGYVVSQKESLKAEWLYSQGKGRSYRLGQHIPLVQYLATVCPLTSAHGLQTEEDAKLDKILSKQRLHQKQLLHQTRSDGYLTSSTPNKRLPLSTEHHSPTHVLQTEPTVQVNNWLRSSSSEDHSYAVRNICSSPFGPPHYSSLYMEDIQTDEDKLNCSLLSSESTFMPVAPGLSPVSPTVELRVPAIKADLPVNETVIEFNKDHTELPPSETPEKPKLIPGLSAMQDDKSCCVYPVIKDENVTENIINCETAVSMESTQTSNGPTCHNLIMNCKQASVLDQDVNHINKISKAATKLQSCWRGFYARKYNPKVKDVCYEIRLSRMQEHIVFLTEEVIRLRKEKEEDRIQRILQGEAVRYLWEQVQAIQQWQNTVKLQTANSSENDLPSASNSKHANPALEELPSSPEKLNRKASPDIPDSGFHSVILNHCTMGNTEKNSSEESEYSQPSLDTGRHYNDKVPDSPADQDLTREEQSQSSKDSFTSEQDSSLLQQYLRSVEQLDETADNTSYSERTEESRPEITTCSDNSDLSCSISHFLPENSKQENIDIHSNLPSIDDGHNTPIPCDSSLLVPQPDLV</sequence>
<keyword id="KW-0970">Cilium biogenesis/degradation</keyword>
<keyword id="KW-0963">Cytoplasm</keyword>
<keyword id="KW-0206">Cytoskeleton</keyword>
<keyword id="KW-0433">Leucine-rich repeat</keyword>
<keyword id="KW-1185">Reference proteome</keyword>
<keyword id="KW-0677">Repeat</keyword>
<feature type="chain" id="PRO_0000263707" description="Centrosomal protein of 97 kDa">
    <location>
        <begin position="1"/>
        <end position="807"/>
    </location>
</feature>
<feature type="repeat" description="LRR 1">
    <location>
        <begin position="34"/>
        <end position="55"/>
    </location>
</feature>
<feature type="repeat" description="LRR 2">
    <location>
        <begin position="56"/>
        <end position="77"/>
    </location>
</feature>
<feature type="repeat" description="LRR 3">
    <location>
        <begin position="78"/>
        <end position="99"/>
    </location>
</feature>
<feature type="repeat" description="LRR 4">
    <location>
        <begin position="100"/>
        <end position="121"/>
    </location>
</feature>
<feature type="repeat" description="LRR 5">
    <location>
        <begin position="122"/>
        <end position="143"/>
    </location>
</feature>
<feature type="repeat" description="LRR 6">
    <location>
        <begin position="144"/>
        <end position="165"/>
    </location>
</feature>
<feature type="repeat" description="LRR 7">
    <location>
        <begin position="168"/>
        <end position="189"/>
    </location>
</feature>
<feature type="domain" description="LRRCT">
    <location>
        <begin position="208"/>
        <end position="246"/>
    </location>
</feature>
<feature type="domain" description="IQ" evidence="2">
    <location>
        <begin position="519"/>
        <end position="548"/>
    </location>
</feature>
<feature type="region of interest" description="Disordered" evidence="3">
    <location>
        <begin position="306"/>
        <end position="330"/>
    </location>
</feature>
<feature type="region of interest" description="Disordered" evidence="3">
    <location>
        <begin position="607"/>
        <end position="756"/>
    </location>
</feature>
<feature type="compositionally biased region" description="Polar residues" evidence="3">
    <location>
        <begin position="607"/>
        <end position="623"/>
    </location>
</feature>
<feature type="compositionally biased region" description="Basic and acidic residues" evidence="3">
    <location>
        <begin position="681"/>
        <end position="690"/>
    </location>
</feature>
<feature type="compositionally biased region" description="Polar residues" evidence="3">
    <location>
        <begin position="704"/>
        <end position="724"/>
    </location>
</feature>
<reference key="1">
    <citation type="submission" date="2004-06" db="EMBL/GenBank/DDBJ databases">
        <authorList>
            <consortium name="NIH - Xenopus Gene Collection (XGC) project"/>
        </authorList>
    </citation>
    <scope>NUCLEOTIDE SEQUENCE [LARGE SCALE MRNA]</scope>
    <source>
        <tissue>Oocyte</tissue>
    </source>
</reference>
<dbReference type="EMBL" id="BC073119">
    <property type="protein sequence ID" value="AAH73119.1"/>
    <property type="molecule type" value="mRNA"/>
</dbReference>
<dbReference type="RefSeq" id="NP_001085670.1">
    <property type="nucleotide sequence ID" value="NM_001092201.1"/>
</dbReference>
<dbReference type="SMR" id="Q6GPJ8"/>
<dbReference type="DNASU" id="444096"/>
<dbReference type="GeneID" id="444096"/>
<dbReference type="KEGG" id="xla:444096"/>
<dbReference type="AGR" id="Xenbase:XB-GENE-949467"/>
<dbReference type="CTD" id="444096"/>
<dbReference type="Xenbase" id="XB-GENE-949467">
    <property type="gene designation" value="cep97.L"/>
</dbReference>
<dbReference type="OrthoDB" id="5954088at2759"/>
<dbReference type="Proteomes" id="UP000186698">
    <property type="component" value="Chromosome 2L"/>
</dbReference>
<dbReference type="Bgee" id="444096">
    <property type="expression patterns" value="Expressed in testis and 19 other cell types or tissues"/>
</dbReference>
<dbReference type="GO" id="GO:0005813">
    <property type="term" value="C:centrosome"/>
    <property type="evidence" value="ECO:0000318"/>
    <property type="project" value="GO_Central"/>
</dbReference>
<dbReference type="GO" id="GO:0005737">
    <property type="term" value="C:cytoplasm"/>
    <property type="evidence" value="ECO:0007669"/>
    <property type="project" value="UniProtKB-KW"/>
</dbReference>
<dbReference type="GO" id="GO:0030030">
    <property type="term" value="P:cell projection organization"/>
    <property type="evidence" value="ECO:0007669"/>
    <property type="project" value="UniProtKB-KW"/>
</dbReference>
<dbReference type="GO" id="GO:1902018">
    <property type="term" value="P:negative regulation of cilium assembly"/>
    <property type="evidence" value="ECO:0000318"/>
    <property type="project" value="GO_Central"/>
</dbReference>
<dbReference type="FunFam" id="3.80.10.10:FF:000165">
    <property type="entry name" value="Centrosomal protein of 97 kDa"/>
    <property type="match status" value="1"/>
</dbReference>
<dbReference type="Gene3D" id="3.80.10.10">
    <property type="entry name" value="Ribonuclease Inhibitor"/>
    <property type="match status" value="2"/>
</dbReference>
<dbReference type="InterPro" id="IPR050576">
    <property type="entry name" value="Cilia_flagella_integrity"/>
</dbReference>
<dbReference type="InterPro" id="IPR001611">
    <property type="entry name" value="Leu-rich_rpt"/>
</dbReference>
<dbReference type="InterPro" id="IPR003591">
    <property type="entry name" value="Leu-rich_rpt_typical-subtyp"/>
</dbReference>
<dbReference type="InterPro" id="IPR032675">
    <property type="entry name" value="LRR_dom_sf"/>
</dbReference>
<dbReference type="PANTHER" id="PTHR45973:SF2">
    <property type="entry name" value="CENTROSOMAL PROTEIN OF 97 KDA"/>
    <property type="match status" value="1"/>
</dbReference>
<dbReference type="PANTHER" id="PTHR45973">
    <property type="entry name" value="PROTEIN PHOSPHATASE 1 REGULATORY SUBUNIT SDS22-RELATED"/>
    <property type="match status" value="1"/>
</dbReference>
<dbReference type="Pfam" id="PF14580">
    <property type="entry name" value="LRR_9"/>
    <property type="match status" value="1"/>
</dbReference>
<dbReference type="SMART" id="SM00365">
    <property type="entry name" value="LRR_SD22"/>
    <property type="match status" value="4"/>
</dbReference>
<dbReference type="SMART" id="SM00369">
    <property type="entry name" value="LRR_TYP"/>
    <property type="match status" value="4"/>
</dbReference>
<dbReference type="SUPFAM" id="SSF52058">
    <property type="entry name" value="L domain-like"/>
    <property type="match status" value="1"/>
</dbReference>
<dbReference type="PROSITE" id="PS50096">
    <property type="entry name" value="IQ"/>
    <property type="match status" value="1"/>
</dbReference>
<dbReference type="PROSITE" id="PS51450">
    <property type="entry name" value="LRR"/>
    <property type="match status" value="7"/>
</dbReference>
<protein>
    <recommendedName>
        <fullName>Centrosomal protein of 97 kDa</fullName>
        <shortName>Cep97</shortName>
    </recommendedName>
    <alternativeName>
        <fullName>Leucine-rich repeat and IQ domain-containing protein 2</fullName>
    </alternativeName>
</protein>
<evidence type="ECO:0000250" key="1">
    <source>
        <dbReference type="UniProtKB" id="Q8IW35"/>
    </source>
</evidence>
<evidence type="ECO:0000255" key="2">
    <source>
        <dbReference type="PROSITE-ProRule" id="PRU00116"/>
    </source>
</evidence>
<evidence type="ECO:0000256" key="3">
    <source>
        <dbReference type="SAM" id="MobiDB-lite"/>
    </source>
</evidence>
<name>CEP97_XENLA</name>
<organism>
    <name type="scientific">Xenopus laevis</name>
    <name type="common">African clawed frog</name>
    <dbReference type="NCBI Taxonomy" id="8355"/>
    <lineage>
        <taxon>Eukaryota</taxon>
        <taxon>Metazoa</taxon>
        <taxon>Chordata</taxon>
        <taxon>Craniata</taxon>
        <taxon>Vertebrata</taxon>
        <taxon>Euteleostomi</taxon>
        <taxon>Amphibia</taxon>
        <taxon>Batrachia</taxon>
        <taxon>Anura</taxon>
        <taxon>Pipoidea</taxon>
        <taxon>Pipidae</taxon>
        <taxon>Xenopodinae</taxon>
        <taxon>Xenopus</taxon>
        <taxon>Xenopus</taxon>
    </lineage>
</organism>
<comment type="function">
    <text evidence="1">Acts as a key negative regulator of ciliogenesis in collaboration with ccp110 by capping the mother centriole thereby preventing cilia formation. Required for recruitment of ccp110 to the centrosome (By similarity).</text>
</comment>
<comment type="subcellular location">
    <subcellularLocation>
        <location evidence="1">Cytoplasm</location>
        <location evidence="1">Cytoskeleton</location>
        <location evidence="1">Microtubule organizing center</location>
        <location evidence="1">Centrosome</location>
    </subcellularLocation>
</comment>